<proteinExistence type="evidence at transcript level"/>
<accession>Q86KC7</accession>
<accession>Q554N2</accession>
<reference key="1">
    <citation type="journal article" date="2002" name="Nature">
        <title>Sequence and analysis of chromosome 2 of Dictyostelium discoideum.</title>
        <authorList>
            <person name="Gloeckner G."/>
            <person name="Eichinger L."/>
            <person name="Szafranski K."/>
            <person name="Pachebat J.A."/>
            <person name="Bankier A.T."/>
            <person name="Dear P.H."/>
            <person name="Lehmann R."/>
            <person name="Baumgart C."/>
            <person name="Parra G."/>
            <person name="Abril J.F."/>
            <person name="Guigo R."/>
            <person name="Kumpf K."/>
            <person name="Tunggal B."/>
            <person name="Cox E.C."/>
            <person name="Quail M.A."/>
            <person name="Platzer M."/>
            <person name="Rosenthal A."/>
            <person name="Noegel A.A."/>
        </authorList>
    </citation>
    <scope>NUCLEOTIDE SEQUENCE [LARGE SCALE GENOMIC DNA]</scope>
    <source>
        <strain>AX4</strain>
    </source>
</reference>
<reference key="2">
    <citation type="journal article" date="2005" name="Nature">
        <title>The genome of the social amoeba Dictyostelium discoideum.</title>
        <authorList>
            <person name="Eichinger L."/>
            <person name="Pachebat J.A."/>
            <person name="Gloeckner G."/>
            <person name="Rajandream M.A."/>
            <person name="Sucgang R."/>
            <person name="Berriman M."/>
            <person name="Song J."/>
            <person name="Olsen R."/>
            <person name="Szafranski K."/>
            <person name="Xu Q."/>
            <person name="Tunggal B."/>
            <person name="Kummerfeld S."/>
            <person name="Madera M."/>
            <person name="Konfortov B.A."/>
            <person name="Rivero F."/>
            <person name="Bankier A.T."/>
            <person name="Lehmann R."/>
            <person name="Hamlin N."/>
            <person name="Davies R."/>
            <person name="Gaudet P."/>
            <person name="Fey P."/>
            <person name="Pilcher K."/>
            <person name="Chen G."/>
            <person name="Saunders D."/>
            <person name="Sodergren E.J."/>
            <person name="Davis P."/>
            <person name="Kerhornou A."/>
            <person name="Nie X."/>
            <person name="Hall N."/>
            <person name="Anjard C."/>
            <person name="Hemphill L."/>
            <person name="Bason N."/>
            <person name="Farbrother P."/>
            <person name="Desany B."/>
            <person name="Just E."/>
            <person name="Morio T."/>
            <person name="Rost R."/>
            <person name="Churcher C.M."/>
            <person name="Cooper J."/>
            <person name="Haydock S."/>
            <person name="van Driessche N."/>
            <person name="Cronin A."/>
            <person name="Goodhead I."/>
            <person name="Muzny D.M."/>
            <person name="Mourier T."/>
            <person name="Pain A."/>
            <person name="Lu M."/>
            <person name="Harper D."/>
            <person name="Lindsay R."/>
            <person name="Hauser H."/>
            <person name="James K.D."/>
            <person name="Quiles M."/>
            <person name="Madan Babu M."/>
            <person name="Saito T."/>
            <person name="Buchrieser C."/>
            <person name="Wardroper A."/>
            <person name="Felder M."/>
            <person name="Thangavelu M."/>
            <person name="Johnson D."/>
            <person name="Knights A."/>
            <person name="Loulseged H."/>
            <person name="Mungall K.L."/>
            <person name="Oliver K."/>
            <person name="Price C."/>
            <person name="Quail M.A."/>
            <person name="Urushihara H."/>
            <person name="Hernandez J."/>
            <person name="Rabbinowitsch E."/>
            <person name="Steffen D."/>
            <person name="Sanders M."/>
            <person name="Ma J."/>
            <person name="Kohara Y."/>
            <person name="Sharp S."/>
            <person name="Simmonds M.N."/>
            <person name="Spiegler S."/>
            <person name="Tivey A."/>
            <person name="Sugano S."/>
            <person name="White B."/>
            <person name="Walker D."/>
            <person name="Woodward J.R."/>
            <person name="Winckler T."/>
            <person name="Tanaka Y."/>
            <person name="Shaulsky G."/>
            <person name="Schleicher M."/>
            <person name="Weinstock G.M."/>
            <person name="Rosenthal A."/>
            <person name="Cox E.C."/>
            <person name="Chisholm R.L."/>
            <person name="Gibbs R.A."/>
            <person name="Loomis W.F."/>
            <person name="Platzer M."/>
            <person name="Kay R.R."/>
            <person name="Williams J.G."/>
            <person name="Dear P.H."/>
            <person name="Noegel A.A."/>
            <person name="Barrell B.G."/>
            <person name="Kuspa A."/>
        </authorList>
    </citation>
    <scope>NUCLEOTIDE SEQUENCE [LARGE SCALE GENOMIC DNA]</scope>
    <source>
        <strain>AX4</strain>
    </source>
</reference>
<reference key="3">
    <citation type="journal article" date="2003" name="Eukaryot. Cell">
        <title>Changing patterns of gene expression in Dictyostelium prestalk cell subtypes recognized by in situ hybridization with genes from microarray analyses.</title>
        <authorList>
            <person name="Maeda M."/>
            <person name="Sakamoto H."/>
            <person name="Iranfar N."/>
            <person name="Fuller D."/>
            <person name="Maruo T."/>
            <person name="Ogihara S."/>
            <person name="Morio T."/>
            <person name="Urushihara H."/>
            <person name="Tanaka Y."/>
            <person name="Loomis W.F."/>
        </authorList>
    </citation>
    <scope>DEVELOPMENTAL STAGE [LARGE SCALE ANALYSIS]</scope>
</reference>
<evidence type="ECO:0000255" key="1"/>
<evidence type="ECO:0000269" key="2">
    <source>
    </source>
</evidence>
<evidence type="ECO:0000305" key="3"/>
<sequence length="451" mass="49065">MKLKLIFSLFLVLVFCSLFVFGDENETEGQESRIDCRLVRCMAANCTEGQVPYKKKGECCESCMLDCSLVDCYTPKCKKGYYLKKPEGQCCQICQRECSAIQCGIPKCAPGYISQVPVGECCPTCVKKPVNPCALVLCPIVDCMIGWVPYKPEGECCTKCKQDCTTVKCAMPVCEDGATPTKNPNECCYKCPPVNCAAVQCLVPKCNANESLYTPPERCCPICRPNPTLDCTNTLCPIVDCMIGWVPYKPEGECCDRCKQDCTLVKCAMPVCEDGSKPIKNPNECCYKCPAVDCSTVRCMRPLCNENEHLYTPPGKCCPICRPNPNCTDAICPACVGHIEPGQCCPTCDTIPVGPDCTTVKCAMPVCEDGAKPTKNPNECCYKCPPVNCAAVQCPVPKCNANESLYTPPERCCPICRPNPDCTGIMCPECVGTKLPGQCCPTCDSIPVEMA</sequence>
<gene>
    <name type="ORF">DDB_G0274171</name>
</gene>
<keyword id="KW-0325">Glycoprotein</keyword>
<keyword id="KW-1185">Reference proteome</keyword>
<keyword id="KW-0964">Secreted</keyword>
<keyword id="KW-0732">Signal</keyword>
<dbReference type="EMBL" id="AAFI02000012">
    <property type="protein sequence ID" value="EAL69978.1"/>
    <property type="molecule type" value="Genomic_DNA"/>
</dbReference>
<dbReference type="RefSeq" id="XP_644291.1">
    <property type="nucleotide sequence ID" value="XM_639199.1"/>
</dbReference>
<dbReference type="STRING" id="44689.Q86KC7"/>
<dbReference type="GlyGen" id="Q86KC7">
    <property type="glycosylation" value="5 sites"/>
</dbReference>
<dbReference type="PaxDb" id="44689-DDB0230011"/>
<dbReference type="EnsemblProtists" id="EAL69978">
    <property type="protein sequence ID" value="EAL69978"/>
    <property type="gene ID" value="DDB_G0274171"/>
</dbReference>
<dbReference type="GeneID" id="8619719"/>
<dbReference type="KEGG" id="ddi:DDB_G0274171"/>
<dbReference type="dictyBase" id="DDB_G0274171">
    <property type="gene designation" value="stcC"/>
</dbReference>
<dbReference type="VEuPathDB" id="AmoebaDB:DDB_G0274171"/>
<dbReference type="eggNOG" id="ENOG502R9FW">
    <property type="taxonomic scope" value="Eukaryota"/>
</dbReference>
<dbReference type="HOGENOM" id="CLU_607529_0_0_1"/>
<dbReference type="InParanoid" id="Q86KC7"/>
<dbReference type="OMA" id="CPKMMNK"/>
<dbReference type="PhylomeDB" id="Q86KC7"/>
<dbReference type="PRO" id="PR:Q86KC7"/>
<dbReference type="Proteomes" id="UP000002195">
    <property type="component" value="Chromosome 2"/>
</dbReference>
<dbReference type="GO" id="GO:0005576">
    <property type="term" value="C:extracellular region"/>
    <property type="evidence" value="ECO:0007669"/>
    <property type="project" value="UniProtKB-SubCell"/>
</dbReference>
<dbReference type="PANTHER" id="PTHR36914:SF1">
    <property type="entry name" value="TNFR-CYS DOMAIN-CONTAINING PROTEIN"/>
    <property type="match status" value="1"/>
</dbReference>
<dbReference type="PANTHER" id="PTHR36914">
    <property type="entry name" value="TRANSMEMBRANE PROTEIN-RELATED"/>
    <property type="match status" value="1"/>
</dbReference>
<organism>
    <name type="scientific">Dictyostelium discoideum</name>
    <name type="common">Social amoeba</name>
    <dbReference type="NCBI Taxonomy" id="44689"/>
    <lineage>
        <taxon>Eukaryota</taxon>
        <taxon>Amoebozoa</taxon>
        <taxon>Evosea</taxon>
        <taxon>Eumycetozoa</taxon>
        <taxon>Dictyostelia</taxon>
        <taxon>Dictyosteliales</taxon>
        <taxon>Dictyosteliaceae</taxon>
        <taxon>Dictyostelium</taxon>
    </lineage>
</organism>
<comment type="subcellular location">
    <subcellularLocation>
        <location evidence="3">Secreted</location>
    </subcellularLocation>
</comment>
<comment type="developmental stage">
    <text evidence="2">Expressed in PstA and PstO cells in the slug stage, becoming preferentially restricted to PstO cells during culmination.</text>
</comment>
<name>Y4171_DICDI</name>
<feature type="signal peptide" evidence="1">
    <location>
        <begin position="1"/>
        <end position="22"/>
    </location>
</feature>
<feature type="chain" id="PRO_0000392620" description="Uncharacterized protein DDB_G0274171">
    <location>
        <begin position="23"/>
        <end position="451"/>
    </location>
</feature>
<feature type="glycosylation site" description="N-linked (GlcNAc...) asparagine" evidence="1">
    <location>
        <position position="25"/>
    </location>
</feature>
<feature type="glycosylation site" description="N-linked (GlcNAc...) asparagine" evidence="1">
    <location>
        <position position="45"/>
    </location>
</feature>
<feature type="glycosylation site" description="N-linked (GlcNAc...) asparagine" evidence="1">
    <location>
        <position position="209"/>
    </location>
</feature>
<feature type="glycosylation site" description="N-linked (GlcNAc...) asparagine" evidence="1">
    <location>
        <position position="326"/>
    </location>
</feature>
<feature type="glycosylation site" description="N-linked (GlcNAc...) asparagine" evidence="1">
    <location>
        <position position="402"/>
    </location>
</feature>
<protein>
    <recommendedName>
        <fullName>Uncharacterized protein DDB_G0274171</fullName>
    </recommendedName>
</protein>